<protein>
    <recommendedName>
        <fullName evidence="1">Large ribosomal subunit protein bL33</fullName>
    </recommendedName>
    <alternativeName>
        <fullName evidence="2">50S ribosomal protein L33</fullName>
    </alternativeName>
</protein>
<comment type="similarity">
    <text evidence="1">Belongs to the bacterial ribosomal protein bL33 family.</text>
</comment>
<evidence type="ECO:0000255" key="1">
    <source>
        <dbReference type="HAMAP-Rule" id="MF_00294"/>
    </source>
</evidence>
<evidence type="ECO:0000305" key="2"/>
<proteinExistence type="inferred from homology"/>
<reference key="1">
    <citation type="submission" date="2006-05" db="EMBL/GenBank/DDBJ databases">
        <title>Complete sequence of chromosome of Silicibacter sp. TM1040.</title>
        <authorList>
            <consortium name="US DOE Joint Genome Institute"/>
            <person name="Copeland A."/>
            <person name="Lucas S."/>
            <person name="Lapidus A."/>
            <person name="Barry K."/>
            <person name="Detter J.C."/>
            <person name="Glavina del Rio T."/>
            <person name="Hammon N."/>
            <person name="Israni S."/>
            <person name="Dalin E."/>
            <person name="Tice H."/>
            <person name="Pitluck S."/>
            <person name="Brettin T."/>
            <person name="Bruce D."/>
            <person name="Han C."/>
            <person name="Tapia R."/>
            <person name="Goodwin L."/>
            <person name="Thompson L.S."/>
            <person name="Gilna P."/>
            <person name="Schmutz J."/>
            <person name="Larimer F."/>
            <person name="Land M."/>
            <person name="Hauser L."/>
            <person name="Kyrpides N."/>
            <person name="Kim E."/>
            <person name="Belas R."/>
            <person name="Moran M.A."/>
            <person name="Buchan A."/>
            <person name="Gonzalez J.M."/>
            <person name="Schell M.A."/>
            <person name="Sun F."/>
            <person name="Richardson P."/>
        </authorList>
    </citation>
    <scope>NUCLEOTIDE SEQUENCE [LARGE SCALE GENOMIC DNA]</scope>
    <source>
        <strain>TM1040</strain>
    </source>
</reference>
<organism>
    <name type="scientific">Ruegeria sp. (strain TM1040)</name>
    <name type="common">Silicibacter sp.</name>
    <dbReference type="NCBI Taxonomy" id="292414"/>
    <lineage>
        <taxon>Bacteria</taxon>
        <taxon>Pseudomonadati</taxon>
        <taxon>Pseudomonadota</taxon>
        <taxon>Alphaproteobacteria</taxon>
        <taxon>Rhodobacterales</taxon>
        <taxon>Roseobacteraceae</taxon>
        <taxon>Ruegeria</taxon>
    </lineage>
</organism>
<dbReference type="EMBL" id="CP000377">
    <property type="protein sequence ID" value="ABF64648.1"/>
    <property type="molecule type" value="Genomic_DNA"/>
</dbReference>
<dbReference type="RefSeq" id="WP_010441901.1">
    <property type="nucleotide sequence ID" value="NC_008044.1"/>
</dbReference>
<dbReference type="SMR" id="Q1GFB8"/>
<dbReference type="STRING" id="292414.TM1040_1915"/>
<dbReference type="KEGG" id="sit:TM1040_1915"/>
<dbReference type="eggNOG" id="COG0267">
    <property type="taxonomic scope" value="Bacteria"/>
</dbReference>
<dbReference type="HOGENOM" id="CLU_190949_1_1_5"/>
<dbReference type="OrthoDB" id="21586at2"/>
<dbReference type="Proteomes" id="UP000000636">
    <property type="component" value="Chromosome"/>
</dbReference>
<dbReference type="GO" id="GO:0022625">
    <property type="term" value="C:cytosolic large ribosomal subunit"/>
    <property type="evidence" value="ECO:0007669"/>
    <property type="project" value="TreeGrafter"/>
</dbReference>
<dbReference type="GO" id="GO:0003735">
    <property type="term" value="F:structural constituent of ribosome"/>
    <property type="evidence" value="ECO:0007669"/>
    <property type="project" value="InterPro"/>
</dbReference>
<dbReference type="GO" id="GO:0006412">
    <property type="term" value="P:translation"/>
    <property type="evidence" value="ECO:0007669"/>
    <property type="project" value="UniProtKB-UniRule"/>
</dbReference>
<dbReference type="Gene3D" id="2.20.28.120">
    <property type="entry name" value="Ribosomal protein L33"/>
    <property type="match status" value="1"/>
</dbReference>
<dbReference type="HAMAP" id="MF_00294">
    <property type="entry name" value="Ribosomal_bL33"/>
    <property type="match status" value="1"/>
</dbReference>
<dbReference type="InterPro" id="IPR001705">
    <property type="entry name" value="Ribosomal_bL33"/>
</dbReference>
<dbReference type="InterPro" id="IPR018264">
    <property type="entry name" value="Ribosomal_bL33_CS"/>
</dbReference>
<dbReference type="InterPro" id="IPR038584">
    <property type="entry name" value="Ribosomal_bL33_sf"/>
</dbReference>
<dbReference type="InterPro" id="IPR011332">
    <property type="entry name" value="Ribosomal_zn-bd"/>
</dbReference>
<dbReference type="NCBIfam" id="NF001860">
    <property type="entry name" value="PRK00595.1"/>
    <property type="match status" value="1"/>
</dbReference>
<dbReference type="NCBIfam" id="TIGR01023">
    <property type="entry name" value="rpmG_bact"/>
    <property type="match status" value="1"/>
</dbReference>
<dbReference type="PANTHER" id="PTHR15238">
    <property type="entry name" value="54S RIBOSOMAL PROTEIN L39, MITOCHONDRIAL"/>
    <property type="match status" value="1"/>
</dbReference>
<dbReference type="PANTHER" id="PTHR15238:SF1">
    <property type="entry name" value="LARGE RIBOSOMAL SUBUNIT PROTEIN BL33M"/>
    <property type="match status" value="1"/>
</dbReference>
<dbReference type="Pfam" id="PF00471">
    <property type="entry name" value="Ribosomal_L33"/>
    <property type="match status" value="1"/>
</dbReference>
<dbReference type="SUPFAM" id="SSF57829">
    <property type="entry name" value="Zn-binding ribosomal proteins"/>
    <property type="match status" value="1"/>
</dbReference>
<dbReference type="PROSITE" id="PS00582">
    <property type="entry name" value="RIBOSOMAL_L33"/>
    <property type="match status" value="1"/>
</dbReference>
<feature type="chain" id="PRO_0000356670" description="Large ribosomal subunit protein bL33">
    <location>
        <begin position="1"/>
        <end position="55"/>
    </location>
</feature>
<accession>Q1GFB8</accession>
<keyword id="KW-1185">Reference proteome</keyword>
<keyword id="KW-0687">Ribonucleoprotein</keyword>
<keyword id="KW-0689">Ribosomal protein</keyword>
<name>RL33_RUEST</name>
<sequence length="55" mass="6369">MAKPTTIKIRLNSTAGTGHFYVTKKNARTMTEKMTIRKYDPVARKHVEYKEGKIK</sequence>
<gene>
    <name evidence="1" type="primary">rpmG</name>
    <name type="ordered locus">TM1040_1915</name>
</gene>